<sequence length="445" mass="49971">MGAVSGKTFYIETFGCQMNAHDSEKVVGTLLAEGYEQVATPEAAELVFYNTCSIRDKAEQKVFNRLQNFKREGMKGKIFGVLGCVAQQEGEKIFDRAPHVSLVAGSASYTRLPEMLVQLEAGNRRVTGLSLDTEETFDTPFTRRDNPHRAYLTIIEGCDKACAYCVVPFTRGPERSRTSESVMAEARGLTEKGYTEVQLLGQNVNSYRDPSPAGWDFATLLAKVAEIPGMRRVRYTTSHPRDFVRPIVDAMDANEAICDHIHLPVQSGSSKVLAAMDRLYTRDEYLRRIDWIKSAKRRYSLTTDIIIGFPGETDADFEQTLDLLDEVQYDSLFSFKYSPRPNTSALAMEDRIPEEEKQRRLLTLQEKQRAIQIRRNAEMIGSIQEVLVEGRNQALGQWIGRTTCNRTLNFSHPDTNGNELVGKYLPVRVTRSGPNSLVGESAALV</sequence>
<feature type="chain" id="PRO_0000374560" description="tRNA-2-methylthio-N(6)-dimethylallyladenosine synthase">
    <location>
        <begin position="1"/>
        <end position="445"/>
    </location>
</feature>
<feature type="domain" description="MTTase N-terminal" evidence="1">
    <location>
        <begin position="7"/>
        <end position="121"/>
    </location>
</feature>
<feature type="domain" description="Radical SAM core" evidence="2">
    <location>
        <begin position="144"/>
        <end position="374"/>
    </location>
</feature>
<feature type="domain" description="TRAM" evidence="1">
    <location>
        <begin position="377"/>
        <end position="443"/>
    </location>
</feature>
<feature type="binding site" evidence="1">
    <location>
        <position position="16"/>
    </location>
    <ligand>
        <name>[4Fe-4S] cluster</name>
        <dbReference type="ChEBI" id="CHEBI:49883"/>
        <label>1</label>
    </ligand>
</feature>
<feature type="binding site" evidence="1">
    <location>
        <position position="52"/>
    </location>
    <ligand>
        <name>[4Fe-4S] cluster</name>
        <dbReference type="ChEBI" id="CHEBI:49883"/>
        <label>1</label>
    </ligand>
</feature>
<feature type="binding site" evidence="1">
    <location>
        <position position="84"/>
    </location>
    <ligand>
        <name>[4Fe-4S] cluster</name>
        <dbReference type="ChEBI" id="CHEBI:49883"/>
        <label>1</label>
    </ligand>
</feature>
<feature type="binding site" evidence="1">
    <location>
        <position position="158"/>
    </location>
    <ligand>
        <name>[4Fe-4S] cluster</name>
        <dbReference type="ChEBI" id="CHEBI:49883"/>
        <label>2</label>
        <note>4Fe-4S-S-AdoMet</note>
    </ligand>
</feature>
<feature type="binding site" evidence="1">
    <location>
        <position position="162"/>
    </location>
    <ligand>
        <name>[4Fe-4S] cluster</name>
        <dbReference type="ChEBI" id="CHEBI:49883"/>
        <label>2</label>
        <note>4Fe-4S-S-AdoMet</note>
    </ligand>
</feature>
<feature type="binding site" evidence="1">
    <location>
        <position position="165"/>
    </location>
    <ligand>
        <name>[4Fe-4S] cluster</name>
        <dbReference type="ChEBI" id="CHEBI:49883"/>
        <label>2</label>
        <note>4Fe-4S-S-AdoMet</note>
    </ligand>
</feature>
<comment type="function">
    <text evidence="1">Catalyzes the methylthiolation of N6-(dimethylallyl)adenosine (i(6)A), leading to the formation of 2-methylthio-N6-(dimethylallyl)adenosine (ms(2)i(6)A) at position 37 in tRNAs that read codons beginning with uridine.</text>
</comment>
<comment type="catalytic activity">
    <reaction evidence="1">
        <text>N(6)-dimethylallyladenosine(37) in tRNA + (sulfur carrier)-SH + AH2 + 2 S-adenosyl-L-methionine = 2-methylsulfanyl-N(6)-dimethylallyladenosine(37) in tRNA + (sulfur carrier)-H + 5'-deoxyadenosine + L-methionine + A + S-adenosyl-L-homocysteine + 2 H(+)</text>
        <dbReference type="Rhea" id="RHEA:37067"/>
        <dbReference type="Rhea" id="RHEA-COMP:10375"/>
        <dbReference type="Rhea" id="RHEA-COMP:10376"/>
        <dbReference type="Rhea" id="RHEA-COMP:14737"/>
        <dbReference type="Rhea" id="RHEA-COMP:14739"/>
        <dbReference type="ChEBI" id="CHEBI:13193"/>
        <dbReference type="ChEBI" id="CHEBI:15378"/>
        <dbReference type="ChEBI" id="CHEBI:17319"/>
        <dbReference type="ChEBI" id="CHEBI:17499"/>
        <dbReference type="ChEBI" id="CHEBI:29917"/>
        <dbReference type="ChEBI" id="CHEBI:57844"/>
        <dbReference type="ChEBI" id="CHEBI:57856"/>
        <dbReference type="ChEBI" id="CHEBI:59789"/>
        <dbReference type="ChEBI" id="CHEBI:64428"/>
        <dbReference type="ChEBI" id="CHEBI:74415"/>
        <dbReference type="ChEBI" id="CHEBI:74417"/>
        <dbReference type="EC" id="2.8.4.3"/>
    </reaction>
</comment>
<comment type="cofactor">
    <cofactor evidence="1">
        <name>[4Fe-4S] cluster</name>
        <dbReference type="ChEBI" id="CHEBI:49883"/>
    </cofactor>
    <text evidence="1">Binds 2 [4Fe-4S] clusters. One cluster is coordinated with 3 cysteines and an exchangeable S-adenosyl-L-methionine.</text>
</comment>
<comment type="subunit">
    <text evidence="1">Monomer.</text>
</comment>
<comment type="subcellular location">
    <subcellularLocation>
        <location evidence="1">Cytoplasm</location>
    </subcellularLocation>
</comment>
<comment type="similarity">
    <text evidence="1">Belongs to the methylthiotransferase family. MiaB subfamily.</text>
</comment>
<dbReference type="EC" id="2.8.4.3" evidence="1"/>
<dbReference type="EMBL" id="CP000473">
    <property type="protein sequence ID" value="ABJ87625.1"/>
    <property type="molecule type" value="Genomic_DNA"/>
</dbReference>
<dbReference type="SMR" id="Q01RU5"/>
<dbReference type="FunCoup" id="Q01RU5">
    <property type="interactions" value="594"/>
</dbReference>
<dbReference type="STRING" id="234267.Acid_6704"/>
<dbReference type="KEGG" id="sus:Acid_6704"/>
<dbReference type="eggNOG" id="COG0621">
    <property type="taxonomic scope" value="Bacteria"/>
</dbReference>
<dbReference type="HOGENOM" id="CLU_018697_2_0_0"/>
<dbReference type="InParanoid" id="Q01RU5"/>
<dbReference type="OrthoDB" id="9805215at2"/>
<dbReference type="GO" id="GO:0005829">
    <property type="term" value="C:cytosol"/>
    <property type="evidence" value="ECO:0007669"/>
    <property type="project" value="TreeGrafter"/>
</dbReference>
<dbReference type="GO" id="GO:0051539">
    <property type="term" value="F:4 iron, 4 sulfur cluster binding"/>
    <property type="evidence" value="ECO:0007669"/>
    <property type="project" value="UniProtKB-UniRule"/>
</dbReference>
<dbReference type="GO" id="GO:0046872">
    <property type="term" value="F:metal ion binding"/>
    <property type="evidence" value="ECO:0007669"/>
    <property type="project" value="UniProtKB-KW"/>
</dbReference>
<dbReference type="GO" id="GO:0035597">
    <property type="term" value="F:N6-isopentenyladenosine methylthiotransferase activity"/>
    <property type="evidence" value="ECO:0007669"/>
    <property type="project" value="TreeGrafter"/>
</dbReference>
<dbReference type="CDD" id="cd01335">
    <property type="entry name" value="Radical_SAM"/>
    <property type="match status" value="1"/>
</dbReference>
<dbReference type="FunFam" id="3.40.50.12160:FF:000003">
    <property type="entry name" value="CDK5 regulatory subunit-associated protein 1"/>
    <property type="match status" value="1"/>
</dbReference>
<dbReference type="FunFam" id="3.80.30.20:FF:000001">
    <property type="entry name" value="tRNA-2-methylthio-N(6)-dimethylallyladenosine synthase 2"/>
    <property type="match status" value="1"/>
</dbReference>
<dbReference type="Gene3D" id="3.40.50.12160">
    <property type="entry name" value="Methylthiotransferase, N-terminal domain"/>
    <property type="match status" value="1"/>
</dbReference>
<dbReference type="Gene3D" id="3.80.30.20">
    <property type="entry name" value="tm_1862 like domain"/>
    <property type="match status" value="1"/>
</dbReference>
<dbReference type="HAMAP" id="MF_01864">
    <property type="entry name" value="tRNA_metthiotr_MiaB"/>
    <property type="match status" value="1"/>
</dbReference>
<dbReference type="InterPro" id="IPR006638">
    <property type="entry name" value="Elp3/MiaA/NifB-like_rSAM"/>
</dbReference>
<dbReference type="InterPro" id="IPR005839">
    <property type="entry name" value="Methylthiotransferase"/>
</dbReference>
<dbReference type="InterPro" id="IPR020612">
    <property type="entry name" value="Methylthiotransferase_CS"/>
</dbReference>
<dbReference type="InterPro" id="IPR013848">
    <property type="entry name" value="Methylthiotransferase_N"/>
</dbReference>
<dbReference type="InterPro" id="IPR038135">
    <property type="entry name" value="Methylthiotransferase_N_sf"/>
</dbReference>
<dbReference type="InterPro" id="IPR006463">
    <property type="entry name" value="MiaB_methiolase"/>
</dbReference>
<dbReference type="InterPro" id="IPR007197">
    <property type="entry name" value="rSAM"/>
</dbReference>
<dbReference type="InterPro" id="IPR023404">
    <property type="entry name" value="rSAM_horseshoe"/>
</dbReference>
<dbReference type="InterPro" id="IPR002792">
    <property type="entry name" value="TRAM_dom"/>
</dbReference>
<dbReference type="NCBIfam" id="TIGR01574">
    <property type="entry name" value="miaB-methiolase"/>
    <property type="match status" value="1"/>
</dbReference>
<dbReference type="NCBIfam" id="TIGR00089">
    <property type="entry name" value="MiaB/RimO family radical SAM methylthiotransferase"/>
    <property type="match status" value="1"/>
</dbReference>
<dbReference type="PANTHER" id="PTHR43020">
    <property type="entry name" value="CDK5 REGULATORY SUBUNIT-ASSOCIATED PROTEIN 1"/>
    <property type="match status" value="1"/>
</dbReference>
<dbReference type="PANTHER" id="PTHR43020:SF2">
    <property type="entry name" value="MITOCHONDRIAL TRNA METHYLTHIOTRANSFERASE CDK5RAP1"/>
    <property type="match status" value="1"/>
</dbReference>
<dbReference type="Pfam" id="PF04055">
    <property type="entry name" value="Radical_SAM"/>
    <property type="match status" value="1"/>
</dbReference>
<dbReference type="Pfam" id="PF01938">
    <property type="entry name" value="TRAM"/>
    <property type="match status" value="1"/>
</dbReference>
<dbReference type="Pfam" id="PF00919">
    <property type="entry name" value="UPF0004"/>
    <property type="match status" value="1"/>
</dbReference>
<dbReference type="SFLD" id="SFLDF00273">
    <property type="entry name" value="(dimethylallyl)adenosine_tRNA"/>
    <property type="match status" value="1"/>
</dbReference>
<dbReference type="SFLD" id="SFLDG01082">
    <property type="entry name" value="B12-binding_domain_containing"/>
    <property type="match status" value="1"/>
</dbReference>
<dbReference type="SFLD" id="SFLDS00029">
    <property type="entry name" value="Radical_SAM"/>
    <property type="match status" value="1"/>
</dbReference>
<dbReference type="SMART" id="SM00729">
    <property type="entry name" value="Elp3"/>
    <property type="match status" value="1"/>
</dbReference>
<dbReference type="SUPFAM" id="SSF102114">
    <property type="entry name" value="Radical SAM enzymes"/>
    <property type="match status" value="1"/>
</dbReference>
<dbReference type="PROSITE" id="PS51449">
    <property type="entry name" value="MTTASE_N"/>
    <property type="match status" value="1"/>
</dbReference>
<dbReference type="PROSITE" id="PS01278">
    <property type="entry name" value="MTTASE_RADICAL"/>
    <property type="match status" value="1"/>
</dbReference>
<dbReference type="PROSITE" id="PS51918">
    <property type="entry name" value="RADICAL_SAM"/>
    <property type="match status" value="1"/>
</dbReference>
<dbReference type="PROSITE" id="PS50926">
    <property type="entry name" value="TRAM"/>
    <property type="match status" value="1"/>
</dbReference>
<organism>
    <name type="scientific">Solibacter usitatus (strain Ellin6076)</name>
    <dbReference type="NCBI Taxonomy" id="234267"/>
    <lineage>
        <taxon>Bacteria</taxon>
        <taxon>Pseudomonadati</taxon>
        <taxon>Acidobacteriota</taxon>
        <taxon>Terriglobia</taxon>
        <taxon>Bryobacterales</taxon>
        <taxon>Solibacteraceae</taxon>
        <taxon>Candidatus Solibacter</taxon>
    </lineage>
</organism>
<keyword id="KW-0004">4Fe-4S</keyword>
<keyword id="KW-0963">Cytoplasm</keyword>
<keyword id="KW-0408">Iron</keyword>
<keyword id="KW-0411">Iron-sulfur</keyword>
<keyword id="KW-0479">Metal-binding</keyword>
<keyword id="KW-0949">S-adenosyl-L-methionine</keyword>
<keyword id="KW-0808">Transferase</keyword>
<keyword id="KW-0819">tRNA processing</keyword>
<gene>
    <name evidence="1" type="primary">miaB</name>
    <name type="ordered locus">Acid_6704</name>
</gene>
<reference key="1">
    <citation type="journal article" date="2009" name="Appl. Environ. Microbiol.">
        <title>Three genomes from the phylum Acidobacteria provide insight into the lifestyles of these microorganisms in soils.</title>
        <authorList>
            <person name="Ward N.L."/>
            <person name="Challacombe J.F."/>
            <person name="Janssen P.H."/>
            <person name="Henrissat B."/>
            <person name="Coutinho P.M."/>
            <person name="Wu M."/>
            <person name="Xie G."/>
            <person name="Haft D.H."/>
            <person name="Sait M."/>
            <person name="Badger J."/>
            <person name="Barabote R.D."/>
            <person name="Bradley B."/>
            <person name="Brettin T.S."/>
            <person name="Brinkac L.M."/>
            <person name="Bruce D."/>
            <person name="Creasy T."/>
            <person name="Daugherty S.C."/>
            <person name="Davidsen T.M."/>
            <person name="DeBoy R.T."/>
            <person name="Detter J.C."/>
            <person name="Dodson R.J."/>
            <person name="Durkin A.S."/>
            <person name="Ganapathy A."/>
            <person name="Gwinn-Giglio M."/>
            <person name="Han C.S."/>
            <person name="Khouri H."/>
            <person name="Kiss H."/>
            <person name="Kothari S.P."/>
            <person name="Madupu R."/>
            <person name="Nelson K.E."/>
            <person name="Nelson W.C."/>
            <person name="Paulsen I."/>
            <person name="Penn K."/>
            <person name="Ren Q."/>
            <person name="Rosovitz M.J."/>
            <person name="Selengut J.D."/>
            <person name="Shrivastava S."/>
            <person name="Sullivan S.A."/>
            <person name="Tapia R."/>
            <person name="Thompson L.S."/>
            <person name="Watkins K.L."/>
            <person name="Yang Q."/>
            <person name="Yu C."/>
            <person name="Zafar N."/>
            <person name="Zhou L."/>
            <person name="Kuske C.R."/>
        </authorList>
    </citation>
    <scope>NUCLEOTIDE SEQUENCE [LARGE SCALE GENOMIC DNA]</scope>
    <source>
        <strain>Ellin6076</strain>
    </source>
</reference>
<protein>
    <recommendedName>
        <fullName evidence="1">tRNA-2-methylthio-N(6)-dimethylallyladenosine synthase</fullName>
        <ecNumber evidence="1">2.8.4.3</ecNumber>
    </recommendedName>
    <alternativeName>
        <fullName evidence="1">(Dimethylallyl)adenosine tRNA methylthiotransferase MiaB</fullName>
    </alternativeName>
    <alternativeName>
        <fullName evidence="1">tRNA-i(6)A37 methylthiotransferase</fullName>
    </alternativeName>
</protein>
<name>MIAB_SOLUE</name>
<accession>Q01RU5</accession>
<proteinExistence type="inferred from homology"/>
<evidence type="ECO:0000255" key="1">
    <source>
        <dbReference type="HAMAP-Rule" id="MF_01864"/>
    </source>
</evidence>
<evidence type="ECO:0000255" key="2">
    <source>
        <dbReference type="PROSITE-ProRule" id="PRU01266"/>
    </source>
</evidence>